<organism>
    <name type="scientific">Saccharomyces cerevisiae (strain ATCC 204508 / S288c)</name>
    <name type="common">Baker's yeast</name>
    <dbReference type="NCBI Taxonomy" id="559292"/>
    <lineage>
        <taxon>Eukaryota</taxon>
        <taxon>Fungi</taxon>
        <taxon>Dikarya</taxon>
        <taxon>Ascomycota</taxon>
        <taxon>Saccharomycotina</taxon>
        <taxon>Saccharomycetes</taxon>
        <taxon>Saccharomycetales</taxon>
        <taxon>Saccharomycetaceae</taxon>
        <taxon>Saccharomyces</taxon>
    </lineage>
</organism>
<comment type="subcellular location">
    <subcellularLocation>
        <location evidence="1">Membrane</location>
        <topology evidence="1">Single-pass membrane protein</topology>
    </subcellularLocation>
</comment>
<comment type="miscellaneous">
    <text evidence="2">Partially overlaps RSC8.</text>
</comment>
<comment type="caution">
    <text evidence="3">Product of a dubious gene prediction unlikely to encode a functional protein. Because of that it is not part of the S.cerevisiae S288c complete/reference proteome set.</text>
</comment>
<dbReference type="EMBL" id="KJ412248">
    <property type="protein sequence ID" value="AHX39291.1"/>
    <property type="molecule type" value="Genomic_DNA"/>
</dbReference>
<dbReference type="MINT" id="A0A023PZD0"/>
<dbReference type="PaxDb" id="4932-YFR036W-A"/>
<dbReference type="EnsemblFungi" id="YFR036W-A_mRNA">
    <property type="protein sequence ID" value="YFR036W-A"/>
    <property type="gene ID" value="YFR036W-A"/>
</dbReference>
<dbReference type="AGR" id="SGD:S000028767"/>
<dbReference type="SGD" id="S000028767">
    <property type="gene designation" value="YFR036W-A"/>
</dbReference>
<dbReference type="HOGENOM" id="CLU_1278508_0_0_1"/>
<dbReference type="ChiTaRS" id="YFR036W-A">
    <property type="organism name" value="yeast"/>
</dbReference>
<dbReference type="GO" id="GO:0016020">
    <property type="term" value="C:membrane"/>
    <property type="evidence" value="ECO:0007669"/>
    <property type="project" value="UniProtKB-SubCell"/>
</dbReference>
<sequence length="216" mass="24214">MTIVHFVGSLFFFFFFSYIFFYNDHGLYTWGCNFAMESPSPTSSPSLPTRFTPCPVAVLPSSSSPSWSFSTSCMPESTCSEISTSFFDTFNSSSDLFRSRICLLSDNRSFSIFSDSFTYFSFSISSCVSRSHSFVNLLSNFSMVSLTNSWIIAWLSSMYFSEISLDLSETLPNLSSPCSSVWTASFTHSINFEPDTLPSRLSPPLPFSVEPTTSRM</sequence>
<gene>
    <name evidence="4" type="ordered locus">YFR036W-A</name>
</gene>
<protein>
    <recommendedName>
        <fullName evidence="2">Putative uncharacterized protein YFR036W-A</fullName>
    </recommendedName>
</protein>
<reference key="1">
    <citation type="journal article" date="1995" name="Nat. Genet.">
        <title>Analysis of the nucleotide sequence of chromosome VI from Saccharomyces cerevisiae.</title>
        <authorList>
            <person name="Murakami Y."/>
            <person name="Naitou M."/>
            <person name="Hagiwara H."/>
            <person name="Shibata T."/>
            <person name="Ozawa M."/>
            <person name="Sasanuma S."/>
            <person name="Sasanuma M."/>
            <person name="Tsuchiya Y."/>
            <person name="Soeda E."/>
            <person name="Yokoyama K."/>
            <person name="Yamazaki M."/>
            <person name="Tashiro H."/>
            <person name="Eki T."/>
        </authorList>
    </citation>
    <scope>NUCLEOTIDE SEQUENCE [LARGE SCALE GENOMIC DNA]</scope>
    <source>
        <strain>ATCC 204508 / S288c</strain>
    </source>
</reference>
<reference key="2">
    <citation type="journal article" date="2014" name="G3 (Bethesda)">
        <title>The reference genome sequence of Saccharomyces cerevisiae: Then and now.</title>
        <authorList>
            <person name="Engel S.R."/>
            <person name="Dietrich F.S."/>
            <person name="Fisk D.G."/>
            <person name="Binkley G."/>
            <person name="Balakrishnan R."/>
            <person name="Costanzo M.C."/>
            <person name="Dwight S.S."/>
            <person name="Hitz B.C."/>
            <person name="Karra K."/>
            <person name="Nash R.S."/>
            <person name="Weng S."/>
            <person name="Wong E.D."/>
            <person name="Lloyd P."/>
            <person name="Skrzypek M.S."/>
            <person name="Miyasato S.R."/>
            <person name="Simison M."/>
            <person name="Cherry J.M."/>
        </authorList>
    </citation>
    <scope>GENOME REANNOTATION</scope>
    <source>
        <strain>ATCC 204508 / S288c</strain>
    </source>
</reference>
<feature type="chain" id="PRO_0000431012" description="Putative uncharacterized protein YFR036W-A">
    <location>
        <begin position="1"/>
        <end position="216"/>
    </location>
</feature>
<feature type="transmembrane region" description="Helical" evidence="1">
    <location>
        <begin position="1"/>
        <end position="21"/>
    </location>
</feature>
<accession>A0A023PZD0</accession>
<proteinExistence type="uncertain"/>
<evidence type="ECO:0000255" key="1"/>
<evidence type="ECO:0000305" key="2"/>
<evidence type="ECO:0000305" key="3">
    <source>
    </source>
</evidence>
<evidence type="ECO:0000312" key="4">
    <source>
        <dbReference type="SGD" id="S000028767"/>
    </source>
</evidence>
<name>YF036_YEAST</name>
<keyword id="KW-0472">Membrane</keyword>
<keyword id="KW-0812">Transmembrane</keyword>
<keyword id="KW-1133">Transmembrane helix</keyword>